<dbReference type="EMBL" id="AF322227">
    <property type="protein sequence ID" value="AAK01654.1"/>
    <property type="molecule type" value="mRNA"/>
</dbReference>
<dbReference type="SMR" id="P82963"/>
<dbReference type="GlyCosmos" id="P82963">
    <property type="glycosylation" value="9 sites, No reported glycans"/>
</dbReference>
<dbReference type="eggNOG" id="KOG0619">
    <property type="taxonomic scope" value="Eukaryota"/>
</dbReference>
<dbReference type="HOGENOM" id="CLU_006060_0_0_1"/>
<dbReference type="OrthoDB" id="10022853at2759"/>
<dbReference type="GO" id="GO:0005886">
    <property type="term" value="C:plasma membrane"/>
    <property type="evidence" value="ECO:0007669"/>
    <property type="project" value="UniProtKB-SubCell"/>
</dbReference>
<dbReference type="GO" id="GO:0007155">
    <property type="term" value="P:cell adhesion"/>
    <property type="evidence" value="ECO:0007669"/>
    <property type="project" value="UniProtKB-KW"/>
</dbReference>
<dbReference type="GO" id="GO:0007601">
    <property type="term" value="P:visual perception"/>
    <property type="evidence" value="ECO:0007669"/>
    <property type="project" value="UniProtKB-KW"/>
</dbReference>
<dbReference type="Gene3D" id="3.80.10.10">
    <property type="entry name" value="Ribonuclease Inhibitor"/>
    <property type="match status" value="5"/>
</dbReference>
<dbReference type="InterPro" id="IPR001611">
    <property type="entry name" value="Leu-rich_rpt"/>
</dbReference>
<dbReference type="InterPro" id="IPR003591">
    <property type="entry name" value="Leu-rich_rpt_typical-subtyp"/>
</dbReference>
<dbReference type="InterPro" id="IPR032675">
    <property type="entry name" value="LRR_dom_sf"/>
</dbReference>
<dbReference type="InterPro" id="IPR050333">
    <property type="entry name" value="SLRP"/>
</dbReference>
<dbReference type="PANTHER" id="PTHR45712">
    <property type="entry name" value="AGAP008170-PA"/>
    <property type="match status" value="1"/>
</dbReference>
<dbReference type="PANTHER" id="PTHR45712:SF22">
    <property type="entry name" value="INSULIN-LIKE GROWTH FACTOR-BINDING PROTEIN COMPLEX ACID LABILE SUBUNIT"/>
    <property type="match status" value="1"/>
</dbReference>
<dbReference type="Pfam" id="PF13516">
    <property type="entry name" value="LRR_6"/>
    <property type="match status" value="2"/>
</dbReference>
<dbReference type="Pfam" id="PF13855">
    <property type="entry name" value="LRR_8"/>
    <property type="match status" value="5"/>
</dbReference>
<dbReference type="PRINTS" id="PR00019">
    <property type="entry name" value="LEURICHRPT"/>
</dbReference>
<dbReference type="SMART" id="SM00364">
    <property type="entry name" value="LRR_BAC"/>
    <property type="match status" value="6"/>
</dbReference>
<dbReference type="SMART" id="SM00365">
    <property type="entry name" value="LRR_SD22"/>
    <property type="match status" value="5"/>
</dbReference>
<dbReference type="SMART" id="SM00369">
    <property type="entry name" value="LRR_TYP"/>
    <property type="match status" value="14"/>
</dbReference>
<dbReference type="SUPFAM" id="SSF52058">
    <property type="entry name" value="L domain-like"/>
    <property type="match status" value="1"/>
</dbReference>
<dbReference type="SUPFAM" id="SSF52047">
    <property type="entry name" value="RNI-like"/>
    <property type="match status" value="1"/>
</dbReference>
<dbReference type="PROSITE" id="PS51450">
    <property type="entry name" value="LRR"/>
    <property type="match status" value="19"/>
</dbReference>
<feature type="chain" id="PRO_0000089637" description="Chaoptin">
    <location>
        <begin position="1" status="less than"/>
        <end position="782"/>
    </location>
</feature>
<feature type="repeat" description="LRR 1">
    <location>
        <begin position="16"/>
        <end position="37"/>
    </location>
</feature>
<feature type="repeat" description="LRR 2">
    <location>
        <begin position="43"/>
        <end position="64"/>
    </location>
</feature>
<feature type="repeat" description="LRR 3">
    <location>
        <begin position="67"/>
        <end position="88"/>
    </location>
</feature>
<feature type="repeat" description="LRR 4">
    <location>
        <begin position="93"/>
        <end position="114"/>
    </location>
</feature>
<feature type="repeat" description="LRR 5">
    <location>
        <begin position="117"/>
        <end position="138"/>
    </location>
</feature>
<feature type="repeat" description="LRR 6">
    <location>
        <begin position="141"/>
        <end position="162"/>
    </location>
</feature>
<feature type="repeat" description="LRR 7">
    <location>
        <begin position="165"/>
        <end position="186"/>
    </location>
</feature>
<feature type="repeat" description="LRR 8">
    <location>
        <begin position="191"/>
        <end position="212"/>
    </location>
</feature>
<feature type="repeat" description="LRR 9">
    <location>
        <begin position="224"/>
        <end position="245"/>
    </location>
</feature>
<feature type="repeat" description="LRR 10">
    <location>
        <begin position="249"/>
        <end position="270"/>
    </location>
</feature>
<feature type="repeat" description="LRR 11">
    <location>
        <begin position="273"/>
        <end position="294"/>
    </location>
</feature>
<feature type="repeat" description="LRR 12">
    <location>
        <begin position="297"/>
        <end position="318"/>
    </location>
</feature>
<feature type="repeat" description="LRR 13">
    <location>
        <begin position="321"/>
        <end position="342"/>
    </location>
</feature>
<feature type="repeat" description="LRR 14">
    <location>
        <begin position="344"/>
        <end position="364"/>
    </location>
</feature>
<feature type="repeat" description="LRR 15">
    <location>
        <begin position="370"/>
        <end position="391"/>
    </location>
</feature>
<feature type="repeat" description="LRR 16">
    <location>
        <begin position="395"/>
        <end position="416"/>
    </location>
</feature>
<feature type="repeat" description="LRR 17">
    <location>
        <begin position="419"/>
        <end position="442"/>
    </location>
</feature>
<feature type="repeat" description="LRR 18">
    <location>
        <begin position="446"/>
        <end position="467"/>
    </location>
</feature>
<feature type="repeat" description="LRR 19">
    <location>
        <begin position="468"/>
        <end position="488"/>
    </location>
</feature>
<feature type="repeat" description="LRR 20">
    <location>
        <begin position="491"/>
        <end position="512"/>
    </location>
</feature>
<feature type="repeat" description="LRR 21">
    <location>
        <begin position="514"/>
        <end position="535"/>
    </location>
</feature>
<feature type="repeat" description="LRR 22">
    <location>
        <begin position="539"/>
        <end position="560"/>
    </location>
</feature>
<feature type="glycosylation site" description="N-linked (GlcNAc...) asparagine" evidence="2">
    <location>
        <position position="196"/>
    </location>
</feature>
<feature type="glycosylation site" description="N-linked (GlcNAc...) asparagine" evidence="2">
    <location>
        <position position="234"/>
    </location>
</feature>
<feature type="glycosylation site" description="N-linked (GlcNAc...) asparagine" evidence="2">
    <location>
        <position position="262"/>
    </location>
</feature>
<feature type="glycosylation site" description="N-linked (GlcNAc...) asparagine" evidence="2">
    <location>
        <position position="454"/>
    </location>
</feature>
<feature type="glycosylation site" description="N-linked (GlcNAc...) asparagine" evidence="2">
    <location>
        <position position="488"/>
    </location>
</feature>
<feature type="glycosylation site" description="N-linked (GlcNAc...) asparagine" evidence="2">
    <location>
        <position position="530"/>
    </location>
</feature>
<feature type="glycosylation site" description="N-linked (GlcNAc...) asparagine" evidence="2">
    <location>
        <position position="618"/>
    </location>
</feature>
<feature type="glycosylation site" description="N-linked (GlcNAc...) asparagine" evidence="2">
    <location>
        <position position="648"/>
    </location>
</feature>
<feature type="glycosylation site" description="N-linked (GlcNAc...) asparagine" evidence="2">
    <location>
        <position position="667"/>
    </location>
</feature>
<feature type="non-terminal residue">
    <location>
        <position position="1"/>
    </location>
</feature>
<sequence>CHFKHRKQRFVDIGDSLLTLKLTHALSSSVQNFPSDAIKILNRLEELDLSNNRLRNVPDNSFHFLRSLKKVHLQDNTIEMIHRGTFQGDIHRDLTEVYFSFNSVRNVQQHTFADLIQLEQIHLDDNRIESLERRAFMNLKSLKRLNLKGNKIATIAYETFQNLPELEDLDLAYNSISSLDFNIFDQVGSLGMFHVNMSHNKLINLVVAPSVPFEQDTGLGGLQNIKVLDLSFNNITSVAKQFFRPVELSLMQLYLGHNKLLNATKDLFGNMPHLQVLDLSHNSLYELDFDTFRNTKKLQWLDTSHNRISEIPNDLFRFLGNLRIVDFSHNRLRSLPDNLFRETGLERLDVSHNLLGKLPLTSLSLASAQTLSELDLSWNSISSLSHGGQLARFKCLSWLDLSYNRLGQIDAGTFKGIPRLASLNLGHNSQLTLEINGLSFQGLEYTLLHLNLDNVSLSQVPALSTPNLLSLSLAFNSLPTVALEVAGNISSLRYLNLDYNDLSAVPIVTHSLTELRHLSLEGNPITTLSNTSLLGAANQLEELNLKNIDLTVLESGAFCKMQPLRTLKIGVYRNIKNFNIPSILQFNDGLKNLEIHVTKDTDTLDNEMRGAWPLKLQNLTLSGKGLKKITGKMFQGVRSPTFHLTVRNTSIIKIPFDVFRNMLPVRNVSVDVRDNILLKNLQNPSTGSKPGKPRSAFLTDLKLMGGKWSCDCDLGWVEVWERKRRQYLCPVLLRVSILRNIIVGTLMMVLGTGCVRIKITGVWLKFLRVILSVVGVKLRWRN</sequence>
<keyword id="KW-0130">Cell adhesion</keyword>
<keyword id="KW-1003">Cell membrane</keyword>
<keyword id="KW-0325">Glycoprotein</keyword>
<keyword id="KW-0433">Leucine-rich repeat</keyword>
<keyword id="KW-0472">Membrane</keyword>
<keyword id="KW-0677">Repeat</keyword>
<keyword id="KW-0716">Sensory transduction</keyword>
<keyword id="KW-0844">Vision</keyword>
<reference key="1">
    <citation type="journal article" date="2001" name="Dev. Genes Evol.">
        <title>Molecular characterization of Tclabial and the 3' end of the Tribolium homeotic complex.</title>
        <authorList>
            <person name="Nie W."/>
            <person name="Stronach B."/>
            <person name="Panganiban G."/>
            <person name="Shippy T."/>
            <person name="Brown S."/>
            <person name="Denell R."/>
        </authorList>
    </citation>
    <scope>NUCLEOTIDE SEQUENCE [MRNA]</scope>
    <source>
        <strain>GA-1</strain>
    </source>
</reference>
<organism>
    <name type="scientific">Tribolium castaneum</name>
    <name type="common">Red flour beetle</name>
    <dbReference type="NCBI Taxonomy" id="7070"/>
    <lineage>
        <taxon>Eukaryota</taxon>
        <taxon>Metazoa</taxon>
        <taxon>Ecdysozoa</taxon>
        <taxon>Arthropoda</taxon>
        <taxon>Hexapoda</taxon>
        <taxon>Insecta</taxon>
        <taxon>Pterygota</taxon>
        <taxon>Neoptera</taxon>
        <taxon>Endopterygota</taxon>
        <taxon>Coleoptera</taxon>
        <taxon>Polyphaga</taxon>
        <taxon>Cucujiformia</taxon>
        <taxon>Tenebrionidae</taxon>
        <taxon>Tenebrionidae incertae sedis</taxon>
        <taxon>Tribolium</taxon>
    </lineage>
</organism>
<evidence type="ECO:0000250" key="1"/>
<evidence type="ECO:0000255" key="2"/>
<evidence type="ECO:0000305" key="3"/>
<gene>
    <name type="primary">CHP</name>
</gene>
<protein>
    <recommendedName>
        <fullName>Chaoptin</fullName>
    </recommendedName>
    <alternativeName>
        <fullName>Photoreceptor cell-specific membrane protein</fullName>
    </alternativeName>
</protein>
<name>CHAO_TRICA</name>
<comment type="function">
    <text evidence="1">Required for photoreceptor cell morphogenesis. Mediates homophilic cellular adhesion (By similarity).</text>
</comment>
<comment type="subcellular location">
    <subcellularLocation>
        <location evidence="1">Cell membrane</location>
        <topology evidence="1">Peripheral membrane protein</topology>
        <orientation evidence="1">Extracellular side</orientation>
    </subcellularLocation>
    <text evidence="1">Extracellular surface of R-cell plasma membrane.</text>
</comment>
<comment type="similarity">
    <text evidence="3">Belongs to the chaoptin family.</text>
</comment>
<accession>P82963</accession>
<proteinExistence type="evidence at transcript level"/>